<evidence type="ECO:0000255" key="1"/>
<evidence type="ECO:0000255" key="2">
    <source>
        <dbReference type="PROSITE-ProRule" id="PRU00691"/>
    </source>
</evidence>
<evidence type="ECO:0000305" key="3"/>
<comment type="function">
    <text>Involved in disulfide-bond formation. Required for HI transformation. Acts by transferring its disulfide bond to other proteins.</text>
</comment>
<comment type="subcellular location">
    <subcellularLocation>
        <location>Periplasm</location>
    </subcellularLocation>
</comment>
<comment type="similarity">
    <text evidence="3">Belongs to the thioredoxin family. DsbA subfamily.</text>
</comment>
<accession>P31810</accession>
<reference key="1">
    <citation type="journal article" date="1992" name="Proc. Natl. Acad. Sci. U.S.A.">
        <title>A periplasmic protein disulfide oxidoreductase is required for transformation of Haemophilus influenzae Rd.</title>
        <authorList>
            <person name="Tomb J.-F."/>
        </authorList>
    </citation>
    <scope>NUCLEOTIDE SEQUENCE [GENOMIC DNA]</scope>
    <source>
        <strain>ATCC 51907 / DSM 11121 / KW20 / Rd</strain>
    </source>
</reference>
<reference key="2">
    <citation type="journal article" date="1995" name="Science">
        <title>Whole-genome random sequencing and assembly of Haemophilus influenzae Rd.</title>
        <authorList>
            <person name="Fleischmann R.D."/>
            <person name="Adams M.D."/>
            <person name="White O."/>
            <person name="Clayton R.A."/>
            <person name="Kirkness E.F."/>
            <person name="Kerlavage A.R."/>
            <person name="Bult C.J."/>
            <person name="Tomb J.-F."/>
            <person name="Dougherty B.A."/>
            <person name="Merrick J.M."/>
            <person name="McKenney K."/>
            <person name="Sutton G.G."/>
            <person name="FitzHugh W."/>
            <person name="Fields C.A."/>
            <person name="Gocayne J.D."/>
            <person name="Scott J.D."/>
            <person name="Shirley R."/>
            <person name="Liu L.-I."/>
            <person name="Glodek A."/>
            <person name="Kelley J.M."/>
            <person name="Weidman J.F."/>
            <person name="Phillips C.A."/>
            <person name="Spriggs T."/>
            <person name="Hedblom E."/>
            <person name="Cotton M.D."/>
            <person name="Utterback T.R."/>
            <person name="Hanna M.C."/>
            <person name="Nguyen D.T."/>
            <person name="Saudek D.M."/>
            <person name="Brandon R.C."/>
            <person name="Fine L.D."/>
            <person name="Fritchman J.L."/>
            <person name="Fuhrmann J.L."/>
            <person name="Geoghagen N.S.M."/>
            <person name="Gnehm C.L."/>
            <person name="McDonald L.A."/>
            <person name="Small K.V."/>
            <person name="Fraser C.M."/>
            <person name="Smith H.O."/>
            <person name="Venter J.C."/>
        </authorList>
    </citation>
    <scope>NUCLEOTIDE SEQUENCE [LARGE SCALE GENOMIC DNA]</scope>
    <source>
        <strain>ATCC 51907 / DSM 11121 / KW20 / Rd</strain>
    </source>
</reference>
<sequence>MKKVLLALGLGVSTLMSVNSFAADLQEGKQYVQVSQQASQQKEVIEFFSFYCPHCYAFEMEYKIPQQVVDALPKDVKFKQYHVNFLGHQSENLTRAWALAMALGAESKVKSPLFEAAQKDALKSMDDIRAIFLSNGITAEQFDGGINSFAVNGLVNKQVNAAEQFKVRGVPDFYVNGKFRVNPEGLNYDDFVKDYVQTVKGLLQK</sequence>
<name>DSBA_HAEIN</name>
<keyword id="KW-1015">Disulfide bond</keyword>
<keyword id="KW-0574">Periplasm</keyword>
<keyword id="KW-0676">Redox-active center</keyword>
<keyword id="KW-1185">Reference proteome</keyword>
<keyword id="KW-0732">Signal</keyword>
<feature type="signal peptide" evidence="1">
    <location>
        <begin position="1"/>
        <end position="22"/>
    </location>
</feature>
<feature type="chain" id="PRO_0000034260" description="Thiol:disulfide interchange protein DsbA">
    <location>
        <begin position="23"/>
        <end position="205"/>
    </location>
</feature>
<feature type="domain" description="Thioredoxin" evidence="2">
    <location>
        <begin position="23"/>
        <end position="201"/>
    </location>
</feature>
<feature type="disulfide bond" description="Redox-active" evidence="2">
    <location>
        <begin position="52"/>
        <end position="55"/>
    </location>
</feature>
<proteinExistence type="inferred from homology"/>
<organism>
    <name type="scientific">Haemophilus influenzae (strain ATCC 51907 / DSM 11121 / KW20 / Rd)</name>
    <dbReference type="NCBI Taxonomy" id="71421"/>
    <lineage>
        <taxon>Bacteria</taxon>
        <taxon>Pseudomonadati</taxon>
        <taxon>Pseudomonadota</taxon>
        <taxon>Gammaproteobacteria</taxon>
        <taxon>Pasteurellales</taxon>
        <taxon>Pasteurellaceae</taxon>
        <taxon>Haemophilus</taxon>
    </lineage>
</organism>
<protein>
    <recommendedName>
        <fullName>Thiol:disulfide interchange protein DsbA</fullName>
    </recommendedName>
</protein>
<dbReference type="EMBL" id="M94205">
    <property type="protein sequence ID" value="AAA24956.1"/>
    <property type="molecule type" value="Genomic_DNA"/>
</dbReference>
<dbReference type="EMBL" id="L42023">
    <property type="protein sequence ID" value="AAC22503.1"/>
    <property type="molecule type" value="Genomic_DNA"/>
</dbReference>
<dbReference type="PIR" id="B64098">
    <property type="entry name" value="B46411"/>
</dbReference>
<dbReference type="RefSeq" id="NP_439006.1">
    <property type="nucleotide sequence ID" value="NC_000907.1"/>
</dbReference>
<dbReference type="SMR" id="P31810"/>
<dbReference type="STRING" id="71421.HI_0846"/>
<dbReference type="EnsemblBacteria" id="AAC22503">
    <property type="protein sequence ID" value="AAC22503"/>
    <property type="gene ID" value="HI_0846"/>
</dbReference>
<dbReference type="KEGG" id="hin:HI_0846"/>
<dbReference type="PATRIC" id="fig|71421.8.peg.887"/>
<dbReference type="eggNOG" id="COG1651">
    <property type="taxonomic scope" value="Bacteria"/>
</dbReference>
<dbReference type="HOGENOM" id="CLU_088255_3_0_6"/>
<dbReference type="OrthoDB" id="9784896at2"/>
<dbReference type="PhylomeDB" id="P31810"/>
<dbReference type="BioCyc" id="HINF71421:G1GJ1-886-MONOMER"/>
<dbReference type="Proteomes" id="UP000000579">
    <property type="component" value="Chromosome"/>
</dbReference>
<dbReference type="GO" id="GO:0030288">
    <property type="term" value="C:outer membrane-bounded periplasmic space"/>
    <property type="evidence" value="ECO:0000318"/>
    <property type="project" value="GO_Central"/>
</dbReference>
<dbReference type="GO" id="GO:0003756">
    <property type="term" value="F:protein disulfide isomerase activity"/>
    <property type="evidence" value="ECO:0000318"/>
    <property type="project" value="GO_Central"/>
</dbReference>
<dbReference type="GO" id="GO:0015035">
    <property type="term" value="F:protein-disulfide reductase activity"/>
    <property type="evidence" value="ECO:0000318"/>
    <property type="project" value="GO_Central"/>
</dbReference>
<dbReference type="GO" id="GO:0071236">
    <property type="term" value="P:cellular response to antibiotic"/>
    <property type="evidence" value="ECO:0000318"/>
    <property type="project" value="GO_Central"/>
</dbReference>
<dbReference type="CDD" id="cd03019">
    <property type="entry name" value="DsbA_DsbA"/>
    <property type="match status" value="1"/>
</dbReference>
<dbReference type="Gene3D" id="3.40.30.10">
    <property type="entry name" value="Glutaredoxin"/>
    <property type="match status" value="1"/>
</dbReference>
<dbReference type="InterPro" id="IPR001853">
    <property type="entry name" value="DSBA-like_thioredoxin_dom"/>
</dbReference>
<dbReference type="InterPro" id="IPR023205">
    <property type="entry name" value="DsbA/DsbL"/>
</dbReference>
<dbReference type="InterPro" id="IPR050824">
    <property type="entry name" value="Thiol_disulfide_DsbA"/>
</dbReference>
<dbReference type="InterPro" id="IPR036249">
    <property type="entry name" value="Thioredoxin-like_sf"/>
</dbReference>
<dbReference type="InterPro" id="IPR017937">
    <property type="entry name" value="Thioredoxin_CS"/>
</dbReference>
<dbReference type="InterPro" id="IPR013766">
    <property type="entry name" value="Thioredoxin_domain"/>
</dbReference>
<dbReference type="NCBIfam" id="NF047695">
    <property type="entry name" value="ThlDiSintDsbAHaem"/>
    <property type="match status" value="1"/>
</dbReference>
<dbReference type="PANTHER" id="PTHR35891">
    <property type="entry name" value="THIOL:DISULFIDE INTERCHANGE PROTEIN DSBA"/>
    <property type="match status" value="1"/>
</dbReference>
<dbReference type="PANTHER" id="PTHR35891:SF2">
    <property type="entry name" value="THIOL:DISULFIDE INTERCHANGE PROTEIN DSBA"/>
    <property type="match status" value="1"/>
</dbReference>
<dbReference type="Pfam" id="PF01323">
    <property type="entry name" value="DSBA"/>
    <property type="match status" value="1"/>
</dbReference>
<dbReference type="PIRSF" id="PIRSF001488">
    <property type="entry name" value="Tdi_protein"/>
    <property type="match status" value="1"/>
</dbReference>
<dbReference type="SUPFAM" id="SSF52833">
    <property type="entry name" value="Thioredoxin-like"/>
    <property type="match status" value="1"/>
</dbReference>
<dbReference type="PROSITE" id="PS00194">
    <property type="entry name" value="THIOREDOXIN_1"/>
    <property type="match status" value="1"/>
</dbReference>
<dbReference type="PROSITE" id="PS51352">
    <property type="entry name" value="THIOREDOXIN_2"/>
    <property type="match status" value="1"/>
</dbReference>
<gene>
    <name type="primary">dsbA</name>
    <name type="synonym">por</name>
    <name type="ordered locus">HI_0846</name>
</gene>